<gene>
    <name evidence="1" type="primary">metJ</name>
    <name type="ordered locus">SG3321</name>
</gene>
<organism>
    <name type="scientific">Salmonella gallinarum (strain 287/91 / NCTC 13346)</name>
    <dbReference type="NCBI Taxonomy" id="550538"/>
    <lineage>
        <taxon>Bacteria</taxon>
        <taxon>Pseudomonadati</taxon>
        <taxon>Pseudomonadota</taxon>
        <taxon>Gammaproteobacteria</taxon>
        <taxon>Enterobacterales</taxon>
        <taxon>Enterobacteriaceae</taxon>
        <taxon>Salmonella</taxon>
    </lineage>
</organism>
<protein>
    <recommendedName>
        <fullName evidence="1">Met repressor</fullName>
    </recommendedName>
    <alternativeName>
        <fullName evidence="1">Met regulon regulatory protein MetJ</fullName>
    </alternativeName>
</protein>
<sequence length="105" mass="12142">MAEWSGEYISPYAEHGKKSEQVKKITVSIPLKVLKILTDERTRRQVNNLRHATNSELLCEAFLHAFTGQPLPDDADLRKERSDEIPEAAKEIMREMGIDPETWEY</sequence>
<evidence type="ECO:0000255" key="1">
    <source>
        <dbReference type="HAMAP-Rule" id="MF_00744"/>
    </source>
</evidence>
<reference key="1">
    <citation type="journal article" date="2008" name="Genome Res.">
        <title>Comparative genome analysis of Salmonella enteritidis PT4 and Salmonella gallinarum 287/91 provides insights into evolutionary and host adaptation pathways.</title>
        <authorList>
            <person name="Thomson N.R."/>
            <person name="Clayton D.J."/>
            <person name="Windhorst D."/>
            <person name="Vernikos G."/>
            <person name="Davidson S."/>
            <person name="Churcher C."/>
            <person name="Quail M.A."/>
            <person name="Stevens M."/>
            <person name="Jones M.A."/>
            <person name="Watson M."/>
            <person name="Barron A."/>
            <person name="Layton A."/>
            <person name="Pickard D."/>
            <person name="Kingsley R.A."/>
            <person name="Bignell A."/>
            <person name="Clark L."/>
            <person name="Harris B."/>
            <person name="Ormond D."/>
            <person name="Abdellah Z."/>
            <person name="Brooks K."/>
            <person name="Cherevach I."/>
            <person name="Chillingworth T."/>
            <person name="Woodward J."/>
            <person name="Norberczak H."/>
            <person name="Lord A."/>
            <person name="Arrowsmith C."/>
            <person name="Jagels K."/>
            <person name="Moule S."/>
            <person name="Mungall K."/>
            <person name="Saunders M."/>
            <person name="Whitehead S."/>
            <person name="Chabalgoity J.A."/>
            <person name="Maskell D."/>
            <person name="Humphreys T."/>
            <person name="Roberts M."/>
            <person name="Barrow P.A."/>
            <person name="Dougan G."/>
            <person name="Parkhill J."/>
        </authorList>
    </citation>
    <scope>NUCLEOTIDE SEQUENCE [LARGE SCALE GENOMIC DNA]</scope>
    <source>
        <strain>287/91 / NCTC 13346</strain>
    </source>
</reference>
<accession>B5RF72</accession>
<comment type="function">
    <text evidence="1">This regulatory protein, when combined with SAM (S-adenosylmethionine) represses the expression of the methionine regulon and of enzymes involved in SAM synthesis.</text>
</comment>
<comment type="subunit">
    <text evidence="1">Homodimer.</text>
</comment>
<comment type="subcellular location">
    <subcellularLocation>
        <location evidence="1">Cytoplasm</location>
    </subcellularLocation>
</comment>
<comment type="domain">
    <text>Does not bind DNA by a helix-turn-helix motif.</text>
</comment>
<comment type="similarity">
    <text evidence="1">Belongs to the MetJ family.</text>
</comment>
<dbReference type="EMBL" id="AM933173">
    <property type="protein sequence ID" value="CAR39115.1"/>
    <property type="molecule type" value="Genomic_DNA"/>
</dbReference>
<dbReference type="RefSeq" id="WP_000852811.1">
    <property type="nucleotide sequence ID" value="NC_011274.1"/>
</dbReference>
<dbReference type="SMR" id="B5RF72"/>
<dbReference type="GeneID" id="66758351"/>
<dbReference type="KEGG" id="seg:SG3321"/>
<dbReference type="HOGENOM" id="CLU_142318_0_0_6"/>
<dbReference type="Proteomes" id="UP000008321">
    <property type="component" value="Chromosome"/>
</dbReference>
<dbReference type="GO" id="GO:0005737">
    <property type="term" value="C:cytoplasm"/>
    <property type="evidence" value="ECO:0007669"/>
    <property type="project" value="UniProtKB-SubCell"/>
</dbReference>
<dbReference type="GO" id="GO:0003677">
    <property type="term" value="F:DNA binding"/>
    <property type="evidence" value="ECO:0007669"/>
    <property type="project" value="UniProtKB-KW"/>
</dbReference>
<dbReference type="GO" id="GO:0003700">
    <property type="term" value="F:DNA-binding transcription factor activity"/>
    <property type="evidence" value="ECO:0007669"/>
    <property type="project" value="InterPro"/>
</dbReference>
<dbReference type="GO" id="GO:0009086">
    <property type="term" value="P:methionine biosynthetic process"/>
    <property type="evidence" value="ECO:0007669"/>
    <property type="project" value="UniProtKB-UniRule"/>
</dbReference>
<dbReference type="GO" id="GO:0045892">
    <property type="term" value="P:negative regulation of DNA-templated transcription"/>
    <property type="evidence" value="ECO:0007669"/>
    <property type="project" value="UniProtKB-UniRule"/>
</dbReference>
<dbReference type="CDD" id="cd00490">
    <property type="entry name" value="Met_repressor_MetJ"/>
    <property type="match status" value="1"/>
</dbReference>
<dbReference type="FunFam" id="1.10.140.10:FF:000001">
    <property type="entry name" value="Met repressor"/>
    <property type="match status" value="1"/>
</dbReference>
<dbReference type="Gene3D" id="1.10.140.10">
    <property type="entry name" value="MET Apo-Repressor, subunit A"/>
    <property type="match status" value="1"/>
</dbReference>
<dbReference type="HAMAP" id="MF_00744">
    <property type="entry name" value="MetJ"/>
    <property type="match status" value="1"/>
</dbReference>
<dbReference type="InterPro" id="IPR002084">
    <property type="entry name" value="Met_repressor_MetJ"/>
</dbReference>
<dbReference type="InterPro" id="IPR023453">
    <property type="entry name" value="Met_repressor_MetJ_dom_sf"/>
</dbReference>
<dbReference type="InterPro" id="IPR010985">
    <property type="entry name" value="Ribbon_hlx_hlx"/>
</dbReference>
<dbReference type="NCBIfam" id="NF003622">
    <property type="entry name" value="PRK05264.1"/>
    <property type="match status" value="1"/>
</dbReference>
<dbReference type="Pfam" id="PF01340">
    <property type="entry name" value="MetJ"/>
    <property type="match status" value="1"/>
</dbReference>
<dbReference type="SUPFAM" id="SSF47598">
    <property type="entry name" value="Ribbon-helix-helix"/>
    <property type="match status" value="1"/>
</dbReference>
<proteinExistence type="inferred from homology"/>
<feature type="chain" id="PRO_1000133218" description="Met repressor">
    <location>
        <begin position="1"/>
        <end position="105"/>
    </location>
</feature>
<keyword id="KW-0028">Amino-acid biosynthesis</keyword>
<keyword id="KW-0963">Cytoplasm</keyword>
<keyword id="KW-0238">DNA-binding</keyword>
<keyword id="KW-0486">Methionine biosynthesis</keyword>
<keyword id="KW-0678">Repressor</keyword>
<keyword id="KW-0804">Transcription</keyword>
<keyword id="KW-0805">Transcription regulation</keyword>
<name>METJ_SALG2</name>